<comment type="function">
    <text evidence="1">Involved in the binding of tRNA to the ribosomes.</text>
</comment>
<comment type="subunit">
    <text evidence="1">Part of the 30S ribosomal subunit.</text>
</comment>
<comment type="similarity">
    <text evidence="1">Belongs to the universal ribosomal protein uS10 family.</text>
</comment>
<dbReference type="EMBL" id="AM902716">
    <property type="protein sequence ID" value="CAP45305.1"/>
    <property type="molecule type" value="Genomic_DNA"/>
</dbReference>
<dbReference type="SMR" id="A9IJ03"/>
<dbReference type="STRING" id="94624.Bpet4953"/>
<dbReference type="KEGG" id="bpt:Bpet4953"/>
<dbReference type="eggNOG" id="COG0051">
    <property type="taxonomic scope" value="Bacteria"/>
</dbReference>
<dbReference type="Proteomes" id="UP000001225">
    <property type="component" value="Chromosome"/>
</dbReference>
<dbReference type="GO" id="GO:1990904">
    <property type="term" value="C:ribonucleoprotein complex"/>
    <property type="evidence" value="ECO:0007669"/>
    <property type="project" value="UniProtKB-KW"/>
</dbReference>
<dbReference type="GO" id="GO:0005840">
    <property type="term" value="C:ribosome"/>
    <property type="evidence" value="ECO:0007669"/>
    <property type="project" value="UniProtKB-KW"/>
</dbReference>
<dbReference type="GO" id="GO:0003735">
    <property type="term" value="F:structural constituent of ribosome"/>
    <property type="evidence" value="ECO:0007669"/>
    <property type="project" value="InterPro"/>
</dbReference>
<dbReference type="GO" id="GO:0000049">
    <property type="term" value="F:tRNA binding"/>
    <property type="evidence" value="ECO:0007669"/>
    <property type="project" value="UniProtKB-UniRule"/>
</dbReference>
<dbReference type="GO" id="GO:0006412">
    <property type="term" value="P:translation"/>
    <property type="evidence" value="ECO:0007669"/>
    <property type="project" value="UniProtKB-UniRule"/>
</dbReference>
<dbReference type="FunFam" id="3.30.70.600:FF:000001">
    <property type="entry name" value="30S ribosomal protein S10"/>
    <property type="match status" value="1"/>
</dbReference>
<dbReference type="Gene3D" id="3.30.70.600">
    <property type="entry name" value="Ribosomal protein S10 domain"/>
    <property type="match status" value="1"/>
</dbReference>
<dbReference type="HAMAP" id="MF_00508">
    <property type="entry name" value="Ribosomal_uS10"/>
    <property type="match status" value="1"/>
</dbReference>
<dbReference type="InterPro" id="IPR001848">
    <property type="entry name" value="Ribosomal_uS10"/>
</dbReference>
<dbReference type="InterPro" id="IPR018268">
    <property type="entry name" value="Ribosomal_uS10_CS"/>
</dbReference>
<dbReference type="InterPro" id="IPR027486">
    <property type="entry name" value="Ribosomal_uS10_dom"/>
</dbReference>
<dbReference type="InterPro" id="IPR036838">
    <property type="entry name" value="Ribosomal_uS10_dom_sf"/>
</dbReference>
<dbReference type="NCBIfam" id="NF001861">
    <property type="entry name" value="PRK00596.1"/>
    <property type="match status" value="1"/>
</dbReference>
<dbReference type="NCBIfam" id="TIGR01049">
    <property type="entry name" value="rpsJ_bact"/>
    <property type="match status" value="1"/>
</dbReference>
<dbReference type="PANTHER" id="PTHR11700">
    <property type="entry name" value="30S RIBOSOMAL PROTEIN S10 FAMILY MEMBER"/>
    <property type="match status" value="1"/>
</dbReference>
<dbReference type="Pfam" id="PF00338">
    <property type="entry name" value="Ribosomal_S10"/>
    <property type="match status" value="1"/>
</dbReference>
<dbReference type="PRINTS" id="PR00971">
    <property type="entry name" value="RIBOSOMALS10"/>
</dbReference>
<dbReference type="SMART" id="SM01403">
    <property type="entry name" value="Ribosomal_S10"/>
    <property type="match status" value="1"/>
</dbReference>
<dbReference type="SUPFAM" id="SSF54999">
    <property type="entry name" value="Ribosomal protein S10"/>
    <property type="match status" value="1"/>
</dbReference>
<dbReference type="PROSITE" id="PS00361">
    <property type="entry name" value="RIBOSOMAL_S10"/>
    <property type="match status" value="1"/>
</dbReference>
<protein>
    <recommendedName>
        <fullName evidence="1">Small ribosomal subunit protein uS10</fullName>
    </recommendedName>
    <alternativeName>
        <fullName evidence="2">30S ribosomal protein S10</fullName>
    </alternativeName>
</protein>
<organism>
    <name type="scientific">Bordetella petrii (strain ATCC BAA-461 / DSM 12804 / CCUG 43448)</name>
    <dbReference type="NCBI Taxonomy" id="340100"/>
    <lineage>
        <taxon>Bacteria</taxon>
        <taxon>Pseudomonadati</taxon>
        <taxon>Pseudomonadota</taxon>
        <taxon>Betaproteobacteria</taxon>
        <taxon>Burkholderiales</taxon>
        <taxon>Alcaligenaceae</taxon>
        <taxon>Bordetella</taxon>
    </lineage>
</organism>
<accession>A9IJ03</accession>
<evidence type="ECO:0000255" key="1">
    <source>
        <dbReference type="HAMAP-Rule" id="MF_00508"/>
    </source>
</evidence>
<evidence type="ECO:0000305" key="2"/>
<reference key="1">
    <citation type="journal article" date="2008" name="BMC Genomics">
        <title>The missing link: Bordetella petrii is endowed with both the metabolic versatility of environmental bacteria and virulence traits of pathogenic Bordetellae.</title>
        <authorList>
            <person name="Gross R."/>
            <person name="Guzman C.A."/>
            <person name="Sebaihia M."/>
            <person name="Martin dos Santos V.A.P."/>
            <person name="Pieper D.H."/>
            <person name="Koebnik R."/>
            <person name="Lechner M."/>
            <person name="Bartels D."/>
            <person name="Buhrmester J."/>
            <person name="Choudhuri J.V."/>
            <person name="Ebensen T."/>
            <person name="Gaigalat L."/>
            <person name="Herrmann S."/>
            <person name="Khachane A.N."/>
            <person name="Larisch C."/>
            <person name="Link S."/>
            <person name="Linke B."/>
            <person name="Meyer F."/>
            <person name="Mormann S."/>
            <person name="Nakunst D."/>
            <person name="Rueckert C."/>
            <person name="Schneiker-Bekel S."/>
            <person name="Schulze K."/>
            <person name="Voerholter F.-J."/>
            <person name="Yevsa T."/>
            <person name="Engle J.T."/>
            <person name="Goldman W.E."/>
            <person name="Puehler A."/>
            <person name="Goebel U.B."/>
            <person name="Goesmann A."/>
            <person name="Bloecker H."/>
            <person name="Kaiser O."/>
            <person name="Martinez-Arias R."/>
        </authorList>
    </citation>
    <scope>NUCLEOTIDE SEQUENCE [LARGE SCALE GENOMIC DNA]</scope>
    <source>
        <strain>ATCC BAA-461 / DSM 12804 / CCUG 43448</strain>
    </source>
</reference>
<name>RS10_BORPD</name>
<feature type="chain" id="PRO_1000127086" description="Small ribosomal subunit protein uS10">
    <location>
        <begin position="1"/>
        <end position="103"/>
    </location>
</feature>
<keyword id="KW-0687">Ribonucleoprotein</keyword>
<keyword id="KW-0689">Ribosomal protein</keyword>
<proteinExistence type="inferred from homology"/>
<gene>
    <name evidence="1" type="primary">rpsJ</name>
    <name type="ordered locus">Bpet4953</name>
</gene>
<sequence>MKNQKIRIRLKAFDYKLIDQSAAEIVDTAKRTGAVVRGPVPLPTRIRRYDVLRSPHVNKSSRDQFEIRTHQRLMDIVDPTDKTVDALMRLDLPAGVDVEIALQ</sequence>